<name>RSMJ_HALHL</name>
<accession>A1WYS6</accession>
<proteinExistence type="inferred from homology"/>
<organism>
    <name type="scientific">Halorhodospira halophila (strain DSM 244 / SL1)</name>
    <name type="common">Ectothiorhodospira halophila (strain DSM 244 / SL1)</name>
    <dbReference type="NCBI Taxonomy" id="349124"/>
    <lineage>
        <taxon>Bacteria</taxon>
        <taxon>Pseudomonadati</taxon>
        <taxon>Pseudomonadota</taxon>
        <taxon>Gammaproteobacteria</taxon>
        <taxon>Chromatiales</taxon>
        <taxon>Ectothiorhodospiraceae</taxon>
        <taxon>Halorhodospira</taxon>
    </lineage>
</organism>
<dbReference type="EC" id="2.1.1.242" evidence="1"/>
<dbReference type="EMBL" id="CP000544">
    <property type="protein sequence ID" value="ABM62838.1"/>
    <property type="molecule type" value="Genomic_DNA"/>
</dbReference>
<dbReference type="RefSeq" id="WP_011814860.1">
    <property type="nucleotide sequence ID" value="NC_008789.1"/>
</dbReference>
<dbReference type="SMR" id="A1WYS6"/>
<dbReference type="STRING" id="349124.Hhal_2074"/>
<dbReference type="KEGG" id="hha:Hhal_2074"/>
<dbReference type="eggNOG" id="COG0742">
    <property type="taxonomic scope" value="Bacteria"/>
</dbReference>
<dbReference type="HOGENOM" id="CLU_076324_0_1_6"/>
<dbReference type="OrthoDB" id="3191794at2"/>
<dbReference type="Proteomes" id="UP000000647">
    <property type="component" value="Chromosome"/>
</dbReference>
<dbReference type="GO" id="GO:0005737">
    <property type="term" value="C:cytoplasm"/>
    <property type="evidence" value="ECO:0007669"/>
    <property type="project" value="UniProtKB-SubCell"/>
</dbReference>
<dbReference type="GO" id="GO:0008990">
    <property type="term" value="F:rRNA (guanine-N2-)-methyltransferase activity"/>
    <property type="evidence" value="ECO:0007669"/>
    <property type="project" value="UniProtKB-UniRule"/>
</dbReference>
<dbReference type="Gene3D" id="3.40.50.150">
    <property type="entry name" value="Vaccinia Virus protein VP39"/>
    <property type="match status" value="1"/>
</dbReference>
<dbReference type="HAMAP" id="MF_01523">
    <property type="entry name" value="16SrRNA_methyltr_J"/>
    <property type="match status" value="1"/>
</dbReference>
<dbReference type="InterPro" id="IPR007536">
    <property type="entry name" value="16SrRNA_methylTrfase_J"/>
</dbReference>
<dbReference type="InterPro" id="IPR029063">
    <property type="entry name" value="SAM-dependent_MTases_sf"/>
</dbReference>
<dbReference type="PANTHER" id="PTHR36112">
    <property type="entry name" value="RIBOSOMAL RNA SMALL SUBUNIT METHYLTRANSFERASE J"/>
    <property type="match status" value="1"/>
</dbReference>
<dbReference type="PANTHER" id="PTHR36112:SF1">
    <property type="entry name" value="RIBOSOMAL RNA SMALL SUBUNIT METHYLTRANSFERASE J"/>
    <property type="match status" value="1"/>
</dbReference>
<dbReference type="Pfam" id="PF04445">
    <property type="entry name" value="SAM_MT"/>
    <property type="match status" value="1"/>
</dbReference>
<dbReference type="SUPFAM" id="SSF53335">
    <property type="entry name" value="S-adenosyl-L-methionine-dependent methyltransferases"/>
    <property type="match status" value="1"/>
</dbReference>
<protein>
    <recommendedName>
        <fullName evidence="1">Ribosomal RNA small subunit methyltransferase J</fullName>
        <ecNumber evidence="1">2.1.1.242</ecNumber>
    </recommendedName>
    <alternativeName>
        <fullName evidence="1">16S rRNA m2G1516 methyltransferase</fullName>
    </alternativeName>
    <alternativeName>
        <fullName evidence="1">rRNA (guanine-N(2)-)-methyltransferase</fullName>
    </alternativeName>
</protein>
<feature type="chain" id="PRO_0000292636" description="Ribosomal RNA small subunit methyltransferase J">
    <location>
        <begin position="1"/>
        <end position="267"/>
    </location>
</feature>
<feature type="binding site" evidence="1">
    <location>
        <begin position="133"/>
        <end position="134"/>
    </location>
    <ligand>
        <name>S-adenosyl-L-methionine</name>
        <dbReference type="ChEBI" id="CHEBI:59789"/>
    </ligand>
</feature>
<feature type="binding site" evidence="1">
    <location>
        <position position="187"/>
    </location>
    <ligand>
        <name>S-adenosyl-L-methionine</name>
        <dbReference type="ChEBI" id="CHEBI:59789"/>
    </ligand>
</feature>
<comment type="function">
    <text evidence="1">Specifically methylates the guanosine in position 1516 of 16S rRNA.</text>
</comment>
<comment type="catalytic activity">
    <reaction evidence="1">
        <text>guanosine(1516) in 16S rRNA + S-adenosyl-L-methionine = N(2)-methylguanosine(1516) in 16S rRNA + S-adenosyl-L-homocysteine + H(+)</text>
        <dbReference type="Rhea" id="RHEA:43220"/>
        <dbReference type="Rhea" id="RHEA-COMP:10412"/>
        <dbReference type="Rhea" id="RHEA-COMP:10413"/>
        <dbReference type="ChEBI" id="CHEBI:15378"/>
        <dbReference type="ChEBI" id="CHEBI:57856"/>
        <dbReference type="ChEBI" id="CHEBI:59789"/>
        <dbReference type="ChEBI" id="CHEBI:74269"/>
        <dbReference type="ChEBI" id="CHEBI:74481"/>
        <dbReference type="EC" id="2.1.1.242"/>
    </reaction>
</comment>
<comment type="subcellular location">
    <subcellularLocation>
        <location evidence="1">Cytoplasm</location>
    </subcellularLocation>
</comment>
<comment type="similarity">
    <text evidence="1">Belongs to the methyltransferase superfamily. RsmJ family.</text>
</comment>
<reference key="1">
    <citation type="submission" date="2006-12" db="EMBL/GenBank/DDBJ databases">
        <title>Complete sequence of Halorhodospira halophila SL1.</title>
        <authorList>
            <consortium name="US DOE Joint Genome Institute"/>
            <person name="Copeland A."/>
            <person name="Lucas S."/>
            <person name="Lapidus A."/>
            <person name="Barry K."/>
            <person name="Detter J.C."/>
            <person name="Glavina del Rio T."/>
            <person name="Hammon N."/>
            <person name="Israni S."/>
            <person name="Dalin E."/>
            <person name="Tice H."/>
            <person name="Pitluck S."/>
            <person name="Saunders E."/>
            <person name="Brettin T."/>
            <person name="Bruce D."/>
            <person name="Han C."/>
            <person name="Tapia R."/>
            <person name="Schmutz J."/>
            <person name="Larimer F."/>
            <person name="Land M."/>
            <person name="Hauser L."/>
            <person name="Kyrpides N."/>
            <person name="Mikhailova N."/>
            <person name="Hoff W."/>
            <person name="Richardson P."/>
        </authorList>
    </citation>
    <scope>NUCLEOTIDE SEQUENCE [LARGE SCALE GENOMIC DNA]</scope>
    <source>
        <strain>DSM 244 / SL1</strain>
    </source>
</reference>
<evidence type="ECO:0000255" key="1">
    <source>
        <dbReference type="HAMAP-Rule" id="MF_01523"/>
    </source>
</evidence>
<gene>
    <name evidence="1" type="primary">rsmJ</name>
    <name type="ordered locus">Hhal_2074</name>
</gene>
<keyword id="KW-0963">Cytoplasm</keyword>
<keyword id="KW-0489">Methyltransferase</keyword>
<keyword id="KW-1185">Reference proteome</keyword>
<keyword id="KW-0698">rRNA processing</keyword>
<keyword id="KW-0949">S-adenosyl-L-methionine</keyword>
<keyword id="KW-0808">Transferase</keyword>
<sequence length="267" mass="28226">MHAGLRCDASTDPGLCGVVAVGDHPAAAAAWAEQLGVPVLEHRPQEGSGVILLADEPPALQLLGRRAPGPVAIDFTDHQLQRRVAGSTLRRDPLARAVGLHRRPQTAVVDATAGLGHDGWVLAALGARMTWIERSPVLAALLDAALERARANAQHADTATRVRLHPGDLCHLLPELDATSREVVYIDPMYPDGSTRGAVGRPAQVLRALHADARGPDEDQLLAAALGHATRRVVVKRPQRAAPVAGPPPSRSVAGRAVRFDVYEVNG</sequence>